<name>GLPR_HALVD</name>
<accession>D4GYE7</accession>
<keyword id="KW-0119">Carbohydrate metabolism</keyword>
<keyword id="KW-0238">DNA-binding</keyword>
<keyword id="KW-0294">Fucose metabolism</keyword>
<keyword id="KW-0313">Glucose metabolism</keyword>
<keyword id="KW-1185">Reference proteome</keyword>
<keyword id="KW-0678">Repressor</keyword>
<keyword id="KW-0804">Transcription</keyword>
<keyword id="KW-0805">Transcription regulation</keyword>
<reference key="1">
    <citation type="journal article" date="2010" name="PLoS ONE">
        <title>The complete genome sequence of Haloferax volcanii DS2, a model archaeon.</title>
        <authorList>
            <person name="Hartman A.L."/>
            <person name="Norais C."/>
            <person name="Badger J.H."/>
            <person name="Delmas S."/>
            <person name="Haldenby S."/>
            <person name="Madupu R."/>
            <person name="Robinson J."/>
            <person name="Khouri H."/>
            <person name="Ren Q."/>
            <person name="Lowe T.M."/>
            <person name="Maupin-Furlow J."/>
            <person name="Pohlschroder M."/>
            <person name="Daniels C."/>
            <person name="Pfeiffer F."/>
            <person name="Allers T."/>
            <person name="Eisen J.A."/>
        </authorList>
    </citation>
    <scope>NUCLEOTIDE SEQUENCE [LARGE SCALE GENOMIC DNA]</scope>
    <source>
        <strain>ATCC 29605 / DSM 3757 / JCM 8879 / NBRC 14742 / NCIMB 2012 / VKM B-1768 / DS2</strain>
    </source>
</reference>
<reference key="2">
    <citation type="journal article" date="2014" name="PLoS Genet.">
        <title>Phylogenetically driven sequencing of extremely halophilic archaea reveals strategies for static and dynamic osmo-response.</title>
        <authorList>
            <person name="Becker E.A."/>
            <person name="Seitzer P.M."/>
            <person name="Tritt A."/>
            <person name="Larsen D."/>
            <person name="Krusor M."/>
            <person name="Yao A.I."/>
            <person name="Wu D."/>
            <person name="Madern D."/>
            <person name="Eisen J.A."/>
            <person name="Darling A.E."/>
            <person name="Facciotti M.T."/>
        </authorList>
    </citation>
    <scope>NUCLEOTIDE SEQUENCE [LARGE SCALE GENOMIC DNA]</scope>
    <source>
        <strain>ATCC 29605 / DSM 3757 / JCM 8879 / NBRC 14742 / NCIMB 2012 / VKM B-1768 / DS2</strain>
    </source>
</reference>
<reference key="3">
    <citation type="journal article" date="2010" name="J. Bacteriol.">
        <title>GlpR represses fructose and glucose metabolic enzymes at the level of transcription in the haloarchaeon Haloferax volcanii.</title>
        <authorList>
            <person name="Rawls K.S."/>
            <person name="Yacovone S.K."/>
            <person name="Maupin-Furlow J.A."/>
        </authorList>
    </citation>
    <scope>INDUCTION</scope>
    <scope>FUNCTION</scope>
    <scope>DISRUPTION PHENOTYPE</scope>
    <source>
        <strain>DS2 / DS70</strain>
    </source>
</reference>
<sequence>MLPAERKRRIVELVSDSDGRSVESLSDHLGYSKATIRRDLRELEDRGLIERSHGGAVPVTSVGREQTYGQKEVQNLEGKRAIADRAVEELAEGQVVFFDAGTTTMEVARKVPKDGTILGVTNSPRLAIELNEEDNEVKLTGGTLRRRTKALVGPTAESFMERTNFDLLFLGTNALDVESGLTTPNEDEARMKELMVEKAAKVVLVADLSKLGRRSFVQFASLEEIDLFITDGTLDADSREEIESAGVTVVDGVAR</sequence>
<dbReference type="EMBL" id="CP001956">
    <property type="protein sequence ID" value="ADE04103.1"/>
    <property type="molecule type" value="Genomic_DNA"/>
</dbReference>
<dbReference type="EMBL" id="AOHU01000090">
    <property type="protein sequence ID" value="ELY28261.1"/>
    <property type="molecule type" value="Genomic_DNA"/>
</dbReference>
<dbReference type="RefSeq" id="WP_004043434.1">
    <property type="nucleotide sequence ID" value="NC_013967.1"/>
</dbReference>
<dbReference type="SMR" id="D4GYE7"/>
<dbReference type="IntAct" id="D4GYE7">
    <property type="interactions" value="5"/>
</dbReference>
<dbReference type="STRING" id="309800.HVO_1501"/>
<dbReference type="PaxDb" id="309800-C498_11226"/>
<dbReference type="EnsemblBacteria" id="ADE04103">
    <property type="protein sequence ID" value="ADE04103"/>
    <property type="gene ID" value="HVO_1501"/>
</dbReference>
<dbReference type="GeneID" id="8924590"/>
<dbReference type="KEGG" id="hvo:HVO_1501"/>
<dbReference type="PATRIC" id="fig|309800.29.peg.2139"/>
<dbReference type="eggNOG" id="arCOG03924">
    <property type="taxonomic scope" value="Archaea"/>
</dbReference>
<dbReference type="HOGENOM" id="CLU_060699_1_4_2"/>
<dbReference type="OrthoDB" id="174736at2157"/>
<dbReference type="Proteomes" id="UP000008243">
    <property type="component" value="Chromosome"/>
</dbReference>
<dbReference type="Proteomes" id="UP000011532">
    <property type="component" value="Unassembled WGS sequence"/>
</dbReference>
<dbReference type="GO" id="GO:0003677">
    <property type="term" value="F:DNA binding"/>
    <property type="evidence" value="ECO:0007669"/>
    <property type="project" value="UniProtKB-KW"/>
</dbReference>
<dbReference type="GO" id="GO:0003700">
    <property type="term" value="F:DNA-binding transcription factor activity"/>
    <property type="evidence" value="ECO:0007669"/>
    <property type="project" value="InterPro"/>
</dbReference>
<dbReference type="GO" id="GO:0006004">
    <property type="term" value="P:fucose metabolic process"/>
    <property type="evidence" value="ECO:0007669"/>
    <property type="project" value="UniProtKB-KW"/>
</dbReference>
<dbReference type="GO" id="GO:0006006">
    <property type="term" value="P:glucose metabolic process"/>
    <property type="evidence" value="ECO:0007669"/>
    <property type="project" value="UniProtKB-KW"/>
</dbReference>
<dbReference type="CDD" id="cd00090">
    <property type="entry name" value="HTH_ARSR"/>
    <property type="match status" value="1"/>
</dbReference>
<dbReference type="Gene3D" id="3.40.50.1360">
    <property type="match status" value="1"/>
</dbReference>
<dbReference type="Gene3D" id="1.10.10.10">
    <property type="entry name" value="Winged helix-like DNA-binding domain superfamily/Winged helix DNA-binding domain"/>
    <property type="match status" value="1"/>
</dbReference>
<dbReference type="InterPro" id="IPR011991">
    <property type="entry name" value="ArsR-like_HTH"/>
</dbReference>
<dbReference type="InterPro" id="IPR050313">
    <property type="entry name" value="Carb_Metab_HTH_regulators"/>
</dbReference>
<dbReference type="InterPro" id="IPR014036">
    <property type="entry name" value="DeoR-like_C"/>
</dbReference>
<dbReference type="InterPro" id="IPR001034">
    <property type="entry name" value="DeoR_HTH"/>
</dbReference>
<dbReference type="InterPro" id="IPR053563">
    <property type="entry name" value="Glycerol_resp_trans_regulator"/>
</dbReference>
<dbReference type="InterPro" id="IPR037171">
    <property type="entry name" value="NagB/RpiA_transferase-like"/>
</dbReference>
<dbReference type="InterPro" id="IPR018356">
    <property type="entry name" value="Tscrpt_reg_HTH_DeoR_CS"/>
</dbReference>
<dbReference type="InterPro" id="IPR036388">
    <property type="entry name" value="WH-like_DNA-bd_sf"/>
</dbReference>
<dbReference type="InterPro" id="IPR036390">
    <property type="entry name" value="WH_DNA-bd_sf"/>
</dbReference>
<dbReference type="NCBIfam" id="NF041397">
    <property type="entry name" value="TranRegGlpR_Halo"/>
    <property type="match status" value="1"/>
</dbReference>
<dbReference type="PANTHER" id="PTHR30363:SF44">
    <property type="entry name" value="AGA OPERON TRANSCRIPTIONAL REPRESSOR-RELATED"/>
    <property type="match status" value="1"/>
</dbReference>
<dbReference type="PANTHER" id="PTHR30363">
    <property type="entry name" value="HTH-TYPE TRANSCRIPTIONAL REGULATOR SRLR-RELATED"/>
    <property type="match status" value="1"/>
</dbReference>
<dbReference type="Pfam" id="PF00455">
    <property type="entry name" value="DeoRC"/>
    <property type="match status" value="1"/>
</dbReference>
<dbReference type="Pfam" id="PF08220">
    <property type="entry name" value="HTH_DeoR"/>
    <property type="match status" value="1"/>
</dbReference>
<dbReference type="PRINTS" id="PR00037">
    <property type="entry name" value="HTHLACR"/>
</dbReference>
<dbReference type="SMART" id="SM01134">
    <property type="entry name" value="DeoRC"/>
    <property type="match status" value="1"/>
</dbReference>
<dbReference type="SMART" id="SM00420">
    <property type="entry name" value="HTH_DEOR"/>
    <property type="match status" value="1"/>
</dbReference>
<dbReference type="SUPFAM" id="SSF100950">
    <property type="entry name" value="NagB/RpiA/CoA transferase-like"/>
    <property type="match status" value="1"/>
</dbReference>
<dbReference type="SUPFAM" id="SSF46785">
    <property type="entry name" value="Winged helix' DNA-binding domain"/>
    <property type="match status" value="1"/>
</dbReference>
<dbReference type="PROSITE" id="PS00894">
    <property type="entry name" value="HTH_DEOR_1"/>
    <property type="match status" value="1"/>
</dbReference>
<dbReference type="PROSITE" id="PS51000">
    <property type="entry name" value="HTH_DEOR_2"/>
    <property type="match status" value="1"/>
</dbReference>
<feature type="chain" id="PRO_0000428912" description="HTH-type transcriptional regulator GlpR">
    <location>
        <begin position="1"/>
        <end position="255"/>
    </location>
</feature>
<feature type="domain" description="HTH deoR-type" evidence="1">
    <location>
        <begin position="3"/>
        <end position="58"/>
    </location>
</feature>
<feature type="DNA-binding region" description="H-T-H motif" evidence="1">
    <location>
        <begin position="20"/>
        <end position="39"/>
    </location>
</feature>
<evidence type="ECO:0000255" key="1">
    <source>
        <dbReference type="PROSITE-ProRule" id="PRU00349"/>
    </source>
</evidence>
<evidence type="ECO:0000269" key="2">
    <source>
    </source>
</evidence>
<proteinExistence type="evidence at transcript level"/>
<organism>
    <name type="scientific">Haloferax volcanii (strain ATCC 29605 / DSM 3757 / JCM 8879 / NBRC 14742 / NCIMB 2012 / VKM B-1768 / DS2)</name>
    <name type="common">Halobacterium volcanii</name>
    <dbReference type="NCBI Taxonomy" id="309800"/>
    <lineage>
        <taxon>Archaea</taxon>
        <taxon>Methanobacteriati</taxon>
        <taxon>Methanobacteriota</taxon>
        <taxon>Stenosarchaea group</taxon>
        <taxon>Halobacteria</taxon>
        <taxon>Halobacteriales</taxon>
        <taxon>Haloferacaceae</taxon>
        <taxon>Haloferax</taxon>
    </lineage>
</organism>
<gene>
    <name type="primary">glpR</name>
    <name type="ordered locus">HVO_1501</name>
    <name type="ORF">C498_11226</name>
</gene>
<comment type="function">
    <text evidence="2">Transcriptional repressor of genes encoding both fructose and glucose metabolic enzymes such as phosphofructokinase (PFK) or 2-keto-3-deoxy-D-gluconate kinase (KDGK) during growth on glycerol. Required for the glycerol-mediated repression of pfkB-specific transcripts, but not needed for the high-levels of the pfkB-specific transcript present when cells are grown on fructose.</text>
</comment>
<comment type="induction">
    <text evidence="2">Expression is repressed by glycerol but highly up-regulated in the presence of fructose or glucose, regardless of glycerol supplementation.</text>
</comment>
<comment type="disruption phenotype">
    <text evidence="2">Leads to pfkB-specific transcript up-regulation.</text>
</comment>
<protein>
    <recommendedName>
        <fullName>HTH-type transcriptional regulator GlpR</fullName>
    </recommendedName>
</protein>